<reference key="1">
    <citation type="journal article" date="1990" name="Virology">
        <title>A novel proviral clone of HIV-2: biological and phylogenetic relationship to other primate immunodeficiency viruses.</title>
        <authorList>
            <person name="Kirchhoff F."/>
            <person name="Jentsch K."/>
            <person name="Bachmann B."/>
            <person name="Stuke A."/>
            <person name="Laloux C."/>
            <person name="Lueke W."/>
            <person name="Stahl-Henning C."/>
            <person name="Schneider J."/>
            <person name="Nieselt K."/>
            <person name="Eigen M."/>
            <person name="Hunsmann G."/>
        </authorList>
    </citation>
    <scope>NUCLEOTIDE SEQUENCE [GENOMIC DNA]</scope>
</reference>
<keyword id="KW-0010">Activator</keyword>
<keyword id="KW-0014">AIDS</keyword>
<keyword id="KW-0131">Cell cycle</keyword>
<keyword id="KW-1079">Host G2/M cell cycle arrest by virus</keyword>
<keyword id="KW-1048">Host nucleus</keyword>
<keyword id="KW-0945">Host-virus interaction</keyword>
<keyword id="KW-1121">Modulation of host cell cycle by virus</keyword>
<keyword id="KW-0597">Phosphoprotein</keyword>
<keyword id="KW-1185">Reference proteome</keyword>
<keyword id="KW-0804">Transcription</keyword>
<keyword id="KW-0805">Transcription regulation</keyword>
<keyword id="KW-1163">Viral penetration into host nucleus</keyword>
<keyword id="KW-0946">Virion</keyword>
<keyword id="KW-1160">Virus entry into host cell</keyword>
<organismHost>
    <name type="scientific">Homo sapiens</name>
    <name type="common">Human</name>
    <dbReference type="NCBI Taxonomy" id="9606"/>
</organismHost>
<gene>
    <name type="primary">vpr</name>
</gene>
<comment type="function">
    <text evidence="1">Stimulates gene expression driven by the HIV-2 LTR. Prevents infected cells from undergoing mitosis and proliferating, by inducing arrest or delay in the G2 phase of the cell cycle. Cell cycle arrest creates a favorable environment for maximizing viral expression and production (By similarity).</text>
</comment>
<comment type="subunit">
    <text evidence="1">Interacts with human UNG.</text>
</comment>
<comment type="subcellular location">
    <subcellularLocation>
        <location>Virion</location>
    </subcellularLocation>
    <subcellularLocation>
        <location evidence="1">Host nucleus</location>
    </subcellularLocation>
</comment>
<comment type="miscellaneous">
    <text>This isolate is from a German AIDS patient (with predominantly neurological complications) who was probably infected in Mali.</text>
</comment>
<accession>P18100</accession>
<proteinExistence type="inferred from homology"/>
<name>VPR_HV2BE</name>
<protein>
    <recommendedName>
        <fullName>Protein Vpr</fullName>
    </recommendedName>
    <alternativeName>
        <fullName>R ORF protein</fullName>
    </alternativeName>
    <alternativeName>
        <fullName>Viral protein R</fullName>
    </alternativeName>
</protein>
<organism>
    <name type="scientific">Human immunodeficiency virus type 2 subtype A (isolate BEN)</name>
    <name type="common">HIV-2</name>
    <dbReference type="NCBI Taxonomy" id="11714"/>
    <lineage>
        <taxon>Viruses</taxon>
        <taxon>Riboviria</taxon>
        <taxon>Pararnavirae</taxon>
        <taxon>Artverviricota</taxon>
        <taxon>Revtraviricetes</taxon>
        <taxon>Ortervirales</taxon>
        <taxon>Retroviridae</taxon>
        <taxon>Orthoretrovirinae</taxon>
        <taxon>Lentivirus</taxon>
        <taxon>Human immunodeficiency virus 2</taxon>
    </lineage>
</organism>
<dbReference type="EMBL" id="M30502">
    <property type="protein sequence ID" value="AAB00740.1"/>
    <property type="molecule type" value="Genomic_DNA"/>
</dbReference>
<dbReference type="RefSeq" id="NP_056841.1">
    <property type="nucleotide sequence ID" value="NC_001722.1"/>
</dbReference>
<dbReference type="SMR" id="P18100"/>
<dbReference type="BioGRID" id="1205554">
    <property type="interactions" value="33"/>
</dbReference>
<dbReference type="KEGG" id="vg:1724718"/>
<dbReference type="Proteomes" id="UP000002242">
    <property type="component" value="Segment"/>
</dbReference>
<dbReference type="GO" id="GO:0043657">
    <property type="term" value="C:host cell"/>
    <property type="evidence" value="ECO:0007669"/>
    <property type="project" value="GOC"/>
</dbReference>
<dbReference type="GO" id="GO:0042025">
    <property type="term" value="C:host cell nucleus"/>
    <property type="evidence" value="ECO:0007669"/>
    <property type="project" value="UniProtKB-SubCell"/>
</dbReference>
<dbReference type="GO" id="GO:0044423">
    <property type="term" value="C:virion component"/>
    <property type="evidence" value="ECO:0007669"/>
    <property type="project" value="UniProtKB-KW"/>
</dbReference>
<dbReference type="GO" id="GO:0046718">
    <property type="term" value="P:symbiont entry into host cell"/>
    <property type="evidence" value="ECO:0007669"/>
    <property type="project" value="UniProtKB-KW"/>
</dbReference>
<dbReference type="GO" id="GO:0039592">
    <property type="term" value="P:symbiont-mediated arrest of host cell cycle during G2/M transition"/>
    <property type="evidence" value="ECO:0007669"/>
    <property type="project" value="UniProtKB-KW"/>
</dbReference>
<dbReference type="GO" id="GO:0075732">
    <property type="term" value="P:viral penetration into host nucleus"/>
    <property type="evidence" value="ECO:0007669"/>
    <property type="project" value="UniProtKB-KW"/>
</dbReference>
<dbReference type="Gene3D" id="6.10.210.10">
    <property type="match status" value="1"/>
</dbReference>
<dbReference type="Gene3D" id="1.20.5.90">
    <property type="entry name" value="VpR/VpX protein, C-terminal domain"/>
    <property type="match status" value="1"/>
</dbReference>
<dbReference type="InterPro" id="IPR000012">
    <property type="entry name" value="RetroV_VpR/X"/>
</dbReference>
<dbReference type="Pfam" id="PF00522">
    <property type="entry name" value="VPR"/>
    <property type="match status" value="1"/>
</dbReference>
<dbReference type="PRINTS" id="PR00444">
    <property type="entry name" value="HIVVPRVPX"/>
</dbReference>
<evidence type="ECO:0000250" key="1"/>
<sequence>MTEAPTEFPPEDGTPRRDLGSDWVIETLREIKEEALRHFDPRLLIALGYYIHNRHGDTLEGARELIKTLQRALFVHFRAGCNRSRIG</sequence>
<feature type="chain" id="PRO_0000085456" description="Protein Vpr">
    <location>
        <begin position="1"/>
        <end position="87"/>
    </location>
</feature>
<feature type="modified residue" description="Phosphoserine; by host" evidence="1">
    <location>
        <position position="84"/>
    </location>
</feature>